<feature type="chain" id="PRO_0000231535" description="Deoxyribose-phosphate aldolase">
    <location>
        <begin position="1"/>
        <end position="226"/>
    </location>
</feature>
<feature type="active site" description="Proton donor/acceptor" evidence="1">
    <location>
        <position position="94"/>
    </location>
</feature>
<feature type="active site" description="Schiff-base intermediate with acetaldehyde" evidence="1">
    <location>
        <position position="156"/>
    </location>
</feature>
<feature type="active site" description="Proton donor/acceptor" evidence="1">
    <location>
        <position position="185"/>
    </location>
</feature>
<proteinExistence type="inferred from homology"/>
<dbReference type="EC" id="4.1.2.4" evidence="1"/>
<dbReference type="EMBL" id="CP000150">
    <property type="protein sequence ID" value="ABB05948.1"/>
    <property type="molecule type" value="Genomic_DNA"/>
</dbReference>
<dbReference type="RefSeq" id="WP_011349592.1">
    <property type="nucleotide sequence ID" value="NC_007509.1"/>
</dbReference>
<dbReference type="SMR" id="Q39NL8"/>
<dbReference type="GeneID" id="45092304"/>
<dbReference type="KEGG" id="bur:Bcep18194_C6902"/>
<dbReference type="PATRIC" id="fig|482957.22.peg.7437"/>
<dbReference type="HOGENOM" id="CLU_053595_0_1_4"/>
<dbReference type="UniPathway" id="UPA00002">
    <property type="reaction ID" value="UER00468"/>
</dbReference>
<dbReference type="Proteomes" id="UP000002705">
    <property type="component" value="Chromosome 3"/>
</dbReference>
<dbReference type="GO" id="GO:0005737">
    <property type="term" value="C:cytoplasm"/>
    <property type="evidence" value="ECO:0007669"/>
    <property type="project" value="UniProtKB-SubCell"/>
</dbReference>
<dbReference type="GO" id="GO:0004139">
    <property type="term" value="F:deoxyribose-phosphate aldolase activity"/>
    <property type="evidence" value="ECO:0007669"/>
    <property type="project" value="UniProtKB-UniRule"/>
</dbReference>
<dbReference type="GO" id="GO:0006018">
    <property type="term" value="P:2-deoxyribose 1-phosphate catabolic process"/>
    <property type="evidence" value="ECO:0007669"/>
    <property type="project" value="UniProtKB-UniRule"/>
</dbReference>
<dbReference type="GO" id="GO:0016052">
    <property type="term" value="P:carbohydrate catabolic process"/>
    <property type="evidence" value="ECO:0007669"/>
    <property type="project" value="TreeGrafter"/>
</dbReference>
<dbReference type="GO" id="GO:0009264">
    <property type="term" value="P:deoxyribonucleotide catabolic process"/>
    <property type="evidence" value="ECO:0007669"/>
    <property type="project" value="InterPro"/>
</dbReference>
<dbReference type="CDD" id="cd00959">
    <property type="entry name" value="DeoC"/>
    <property type="match status" value="1"/>
</dbReference>
<dbReference type="FunFam" id="3.20.20.70:FF:000044">
    <property type="entry name" value="Deoxyribose-phosphate aldolase"/>
    <property type="match status" value="1"/>
</dbReference>
<dbReference type="Gene3D" id="3.20.20.70">
    <property type="entry name" value="Aldolase class I"/>
    <property type="match status" value="1"/>
</dbReference>
<dbReference type="HAMAP" id="MF_00114">
    <property type="entry name" value="DeoC_type1"/>
    <property type="match status" value="1"/>
</dbReference>
<dbReference type="InterPro" id="IPR013785">
    <property type="entry name" value="Aldolase_TIM"/>
</dbReference>
<dbReference type="InterPro" id="IPR011343">
    <property type="entry name" value="DeoC"/>
</dbReference>
<dbReference type="InterPro" id="IPR002915">
    <property type="entry name" value="DeoC/FbaB/LacD_aldolase"/>
</dbReference>
<dbReference type="InterPro" id="IPR028581">
    <property type="entry name" value="DeoC_typeI"/>
</dbReference>
<dbReference type="NCBIfam" id="TIGR00126">
    <property type="entry name" value="deoC"/>
    <property type="match status" value="1"/>
</dbReference>
<dbReference type="PANTHER" id="PTHR10889">
    <property type="entry name" value="DEOXYRIBOSE-PHOSPHATE ALDOLASE"/>
    <property type="match status" value="1"/>
</dbReference>
<dbReference type="PANTHER" id="PTHR10889:SF1">
    <property type="entry name" value="DEOXYRIBOSE-PHOSPHATE ALDOLASE"/>
    <property type="match status" value="1"/>
</dbReference>
<dbReference type="Pfam" id="PF01791">
    <property type="entry name" value="DeoC"/>
    <property type="match status" value="1"/>
</dbReference>
<dbReference type="PIRSF" id="PIRSF001357">
    <property type="entry name" value="DeoC"/>
    <property type="match status" value="1"/>
</dbReference>
<dbReference type="SMART" id="SM01133">
    <property type="entry name" value="DeoC"/>
    <property type="match status" value="1"/>
</dbReference>
<dbReference type="SUPFAM" id="SSF51569">
    <property type="entry name" value="Aldolase"/>
    <property type="match status" value="1"/>
</dbReference>
<name>DEOC_BURL3</name>
<gene>
    <name evidence="1" type="primary">deoC</name>
    <name type="ordered locus">Bcep18194_C6902</name>
</gene>
<accession>Q39NL8</accession>
<protein>
    <recommendedName>
        <fullName evidence="1">Deoxyribose-phosphate aldolase</fullName>
        <shortName evidence="1">DERA</shortName>
        <ecNumber evidence="1">4.1.2.4</ecNumber>
    </recommendedName>
    <alternativeName>
        <fullName evidence="1">2-deoxy-D-ribose 5-phosphate aldolase</fullName>
    </alternativeName>
    <alternativeName>
        <fullName evidence="1">Phosphodeoxyriboaldolase</fullName>
        <shortName evidence="1">Deoxyriboaldolase</shortName>
    </alternativeName>
</protein>
<sequence>MPLSNAQLAQTIDHTLLAPDASDAQIRELCRQAAEHRFYSVCVNSANVPLAARELADTGVLVCAVVGFPLGAGLSAAKAFEATVAIAAGAGEIDMVINIGALKSGRADDVKADIDAVHRACGAVPLKVILETGLLTDDEKVRVCEMCRDLGVAFVKTSTGFGHGGATLADVALMRRTVGPVLGVKASGGVRDRAAALAMIEAGATRLGTSSGVAIVTDQDGSASAY</sequence>
<evidence type="ECO:0000255" key="1">
    <source>
        <dbReference type="HAMAP-Rule" id="MF_00114"/>
    </source>
</evidence>
<keyword id="KW-0963">Cytoplasm</keyword>
<keyword id="KW-0456">Lyase</keyword>
<keyword id="KW-0704">Schiff base</keyword>
<organism>
    <name type="scientific">Burkholderia lata (strain ATCC 17760 / DSM 23089 / LMG 22485 / NCIMB 9086 / R18194 / 383)</name>
    <dbReference type="NCBI Taxonomy" id="482957"/>
    <lineage>
        <taxon>Bacteria</taxon>
        <taxon>Pseudomonadati</taxon>
        <taxon>Pseudomonadota</taxon>
        <taxon>Betaproteobacteria</taxon>
        <taxon>Burkholderiales</taxon>
        <taxon>Burkholderiaceae</taxon>
        <taxon>Burkholderia</taxon>
        <taxon>Burkholderia cepacia complex</taxon>
    </lineage>
</organism>
<comment type="function">
    <text evidence="1">Catalyzes a reversible aldol reaction between acetaldehyde and D-glyceraldehyde 3-phosphate to generate 2-deoxy-D-ribose 5-phosphate.</text>
</comment>
<comment type="catalytic activity">
    <reaction evidence="1">
        <text>2-deoxy-D-ribose 5-phosphate = D-glyceraldehyde 3-phosphate + acetaldehyde</text>
        <dbReference type="Rhea" id="RHEA:12821"/>
        <dbReference type="ChEBI" id="CHEBI:15343"/>
        <dbReference type="ChEBI" id="CHEBI:59776"/>
        <dbReference type="ChEBI" id="CHEBI:62877"/>
        <dbReference type="EC" id="4.1.2.4"/>
    </reaction>
</comment>
<comment type="pathway">
    <text evidence="1">Carbohydrate degradation; 2-deoxy-D-ribose 1-phosphate degradation; D-glyceraldehyde 3-phosphate and acetaldehyde from 2-deoxy-alpha-D-ribose 1-phosphate: step 2/2.</text>
</comment>
<comment type="subcellular location">
    <subcellularLocation>
        <location evidence="1">Cytoplasm</location>
    </subcellularLocation>
</comment>
<comment type="similarity">
    <text evidence="1">Belongs to the DeoC/FbaB aldolase family. DeoC type 1 subfamily.</text>
</comment>
<reference key="1">
    <citation type="submission" date="2005-10" db="EMBL/GenBank/DDBJ databases">
        <title>Complete sequence of chromosome 3 of Burkholderia sp. 383.</title>
        <authorList>
            <consortium name="US DOE Joint Genome Institute"/>
            <person name="Copeland A."/>
            <person name="Lucas S."/>
            <person name="Lapidus A."/>
            <person name="Barry K."/>
            <person name="Detter J.C."/>
            <person name="Glavina T."/>
            <person name="Hammon N."/>
            <person name="Israni S."/>
            <person name="Pitluck S."/>
            <person name="Chain P."/>
            <person name="Malfatti S."/>
            <person name="Shin M."/>
            <person name="Vergez L."/>
            <person name="Schmutz J."/>
            <person name="Larimer F."/>
            <person name="Land M."/>
            <person name="Kyrpides N."/>
            <person name="Lykidis A."/>
            <person name="Richardson P."/>
        </authorList>
    </citation>
    <scope>NUCLEOTIDE SEQUENCE [LARGE SCALE GENOMIC DNA]</scope>
    <source>
        <strain>ATCC 17760 / DSM 23089 / LMG 22485 / NCIMB 9086 / R18194 / 383</strain>
    </source>
</reference>